<dbReference type="EC" id="2.7.1.28"/>
<dbReference type="EC" id="2.7.1.29"/>
<dbReference type="EC" id="4.6.1.15"/>
<dbReference type="EMBL" id="BC021917">
    <property type="protein sequence ID" value="AAH21917.1"/>
    <property type="molecule type" value="mRNA"/>
</dbReference>
<dbReference type="CCDS" id="CCDS37914.1"/>
<dbReference type="RefSeq" id="NP_001404794.1">
    <property type="nucleotide sequence ID" value="NM_001417865.1"/>
</dbReference>
<dbReference type="RefSeq" id="NP_001404795.1">
    <property type="nucleotide sequence ID" value="NM_001417866.1"/>
</dbReference>
<dbReference type="RefSeq" id="NP_001404796.1">
    <property type="nucleotide sequence ID" value="NM_001417867.1"/>
</dbReference>
<dbReference type="RefSeq" id="NP_663471.1">
    <property type="nucleotide sequence ID" value="NM_145496.2"/>
</dbReference>
<dbReference type="RefSeq" id="XP_006527005.1">
    <property type="nucleotide sequence ID" value="XM_006526942.2"/>
</dbReference>
<dbReference type="RefSeq" id="XP_006527006.1">
    <property type="nucleotide sequence ID" value="XM_006526943.3"/>
</dbReference>
<dbReference type="RefSeq" id="XP_006527007.1">
    <property type="nucleotide sequence ID" value="XM_006526944.3"/>
</dbReference>
<dbReference type="SMR" id="Q8VC30"/>
<dbReference type="BioGRID" id="230448">
    <property type="interactions" value="7"/>
</dbReference>
<dbReference type="FunCoup" id="Q8VC30">
    <property type="interactions" value="1480"/>
</dbReference>
<dbReference type="STRING" id="10090.ENSMUSP00000157520"/>
<dbReference type="GlyGen" id="Q8VC30">
    <property type="glycosylation" value="1 site, 1 O-linked glycan (1 site)"/>
</dbReference>
<dbReference type="iPTMnet" id="Q8VC30"/>
<dbReference type="PhosphoSitePlus" id="Q8VC30"/>
<dbReference type="SwissPalm" id="Q8VC30"/>
<dbReference type="REPRODUCTION-2DPAGE" id="IPI00310669"/>
<dbReference type="REPRODUCTION-2DPAGE" id="Q8VC30"/>
<dbReference type="jPOST" id="Q8VC30"/>
<dbReference type="PaxDb" id="10090-ENSMUSP00000044556"/>
<dbReference type="PeptideAtlas" id="Q8VC30"/>
<dbReference type="ProteomicsDB" id="259030"/>
<dbReference type="Pumba" id="Q8VC30"/>
<dbReference type="Antibodypedia" id="28186">
    <property type="antibodies" value="179 antibodies from 31 providers"/>
</dbReference>
<dbReference type="DNASU" id="225913"/>
<dbReference type="Ensembl" id="ENSMUST00000037678.7">
    <property type="protein sequence ID" value="ENSMUSP00000044556.7"/>
    <property type="gene ID" value="ENSMUSG00000034371.10"/>
</dbReference>
<dbReference type="Ensembl" id="ENSMUST00000236607.2">
    <property type="protein sequence ID" value="ENSMUSP00000157520.2"/>
    <property type="gene ID" value="ENSMUSG00000034371.10"/>
</dbReference>
<dbReference type="Ensembl" id="ENSMUST00000236950.2">
    <property type="protein sequence ID" value="ENSMUSP00000158068.2"/>
    <property type="gene ID" value="ENSMUSG00000034371.10"/>
</dbReference>
<dbReference type="GeneID" id="225913"/>
<dbReference type="KEGG" id="mmu:225913"/>
<dbReference type="UCSC" id="uc008gql.1">
    <property type="organism name" value="mouse"/>
</dbReference>
<dbReference type="AGR" id="MGI:2385084"/>
<dbReference type="CTD" id="26007"/>
<dbReference type="MGI" id="MGI:2385084">
    <property type="gene designation" value="Tkfc"/>
</dbReference>
<dbReference type="VEuPathDB" id="HostDB:ENSMUSG00000034371"/>
<dbReference type="eggNOG" id="KOG2426">
    <property type="taxonomic scope" value="Eukaryota"/>
</dbReference>
<dbReference type="GeneTree" id="ENSGT00390000015415"/>
<dbReference type="HOGENOM" id="CLU_017054_6_2_1"/>
<dbReference type="InParanoid" id="Q8VC30"/>
<dbReference type="OMA" id="ALNMNGF"/>
<dbReference type="OrthoDB" id="1724672at2759"/>
<dbReference type="PhylomeDB" id="Q8VC30"/>
<dbReference type="TreeFam" id="TF313821"/>
<dbReference type="BRENDA" id="2.7.1.28">
    <property type="organism ID" value="3474"/>
</dbReference>
<dbReference type="Reactome" id="R-MMU-70350">
    <property type="pathway name" value="Fructose catabolism"/>
</dbReference>
<dbReference type="BioGRID-ORCS" id="225913">
    <property type="hits" value="1 hit in 78 CRISPR screens"/>
</dbReference>
<dbReference type="ChiTaRS" id="Tkfc">
    <property type="organism name" value="mouse"/>
</dbReference>
<dbReference type="PRO" id="PR:Q8VC30"/>
<dbReference type="Proteomes" id="UP000000589">
    <property type="component" value="Chromosome 19"/>
</dbReference>
<dbReference type="RNAct" id="Q8VC30">
    <property type="molecule type" value="protein"/>
</dbReference>
<dbReference type="Bgee" id="ENSMUSG00000034371">
    <property type="expression patterns" value="Expressed in spermatocyte and 77 other cell types or tissues"/>
</dbReference>
<dbReference type="ExpressionAtlas" id="Q8VC30">
    <property type="expression patterns" value="baseline and differential"/>
</dbReference>
<dbReference type="GO" id="GO:0005829">
    <property type="term" value="C:cytosol"/>
    <property type="evidence" value="ECO:0000266"/>
    <property type="project" value="MGI"/>
</dbReference>
<dbReference type="GO" id="GO:0005524">
    <property type="term" value="F:ATP binding"/>
    <property type="evidence" value="ECO:0007669"/>
    <property type="project" value="UniProtKB-KW"/>
</dbReference>
<dbReference type="GO" id="GO:0034012">
    <property type="term" value="F:FAD-AMP lyase (cyclizing) activity"/>
    <property type="evidence" value="ECO:0007669"/>
    <property type="project" value="UniProtKB-EC"/>
</dbReference>
<dbReference type="GO" id="GO:0004371">
    <property type="term" value="F:glycerone kinase activity"/>
    <property type="evidence" value="ECO:0007669"/>
    <property type="project" value="UniProtKB-EC"/>
</dbReference>
<dbReference type="GO" id="GO:0046872">
    <property type="term" value="F:metal ion binding"/>
    <property type="evidence" value="ECO:0007669"/>
    <property type="project" value="UniProtKB-KW"/>
</dbReference>
<dbReference type="GO" id="GO:0050354">
    <property type="term" value="F:triokinase activity"/>
    <property type="evidence" value="ECO:0000314"/>
    <property type="project" value="MGI"/>
</dbReference>
<dbReference type="GO" id="GO:0046835">
    <property type="term" value="P:carbohydrate phosphorylation"/>
    <property type="evidence" value="ECO:0007669"/>
    <property type="project" value="Ensembl"/>
</dbReference>
<dbReference type="GO" id="GO:0061624">
    <property type="term" value="P:fructose catabolic process to hydroxyacetone phosphate and glyceraldehyde-3-phosphate"/>
    <property type="evidence" value="ECO:0000315"/>
    <property type="project" value="MGI"/>
</dbReference>
<dbReference type="GO" id="GO:0006071">
    <property type="term" value="P:glycerol metabolic process"/>
    <property type="evidence" value="ECO:0007669"/>
    <property type="project" value="InterPro"/>
</dbReference>
<dbReference type="GO" id="GO:0061625">
    <property type="term" value="P:glycolytic process through fructose-1-phosphate"/>
    <property type="evidence" value="ECO:0000305"/>
    <property type="project" value="MGI"/>
</dbReference>
<dbReference type="GO" id="GO:0039534">
    <property type="term" value="P:negative regulation of MDA-5 signaling pathway"/>
    <property type="evidence" value="ECO:0000250"/>
    <property type="project" value="UniProtKB"/>
</dbReference>
<dbReference type="FunFam" id="1.25.40.340:FF:000001">
    <property type="entry name" value="Dihydroxyacetone kinase 1"/>
    <property type="match status" value="1"/>
</dbReference>
<dbReference type="FunFam" id="3.40.50.10440:FF:000001">
    <property type="entry name" value="Dihydroxyacetone kinase, DhaK subunit"/>
    <property type="match status" value="1"/>
</dbReference>
<dbReference type="FunFam" id="3.30.1180.20:FF:000003">
    <property type="entry name" value="triokinase/FMN cyclase isoform X1"/>
    <property type="match status" value="1"/>
</dbReference>
<dbReference type="Gene3D" id="1.25.40.340">
    <property type="match status" value="1"/>
</dbReference>
<dbReference type="Gene3D" id="3.40.50.10440">
    <property type="entry name" value="Dihydroxyacetone kinase, domain 1"/>
    <property type="match status" value="1"/>
</dbReference>
<dbReference type="Gene3D" id="3.30.1180.20">
    <property type="entry name" value="Dihydroxyacetone kinase, domain 2"/>
    <property type="match status" value="1"/>
</dbReference>
<dbReference type="InterPro" id="IPR012734">
    <property type="entry name" value="DhaK_ATP"/>
</dbReference>
<dbReference type="InterPro" id="IPR004006">
    <property type="entry name" value="DhaK_dom"/>
</dbReference>
<dbReference type="InterPro" id="IPR004007">
    <property type="entry name" value="DhaL_dom"/>
</dbReference>
<dbReference type="InterPro" id="IPR036117">
    <property type="entry name" value="DhaL_dom_sf"/>
</dbReference>
<dbReference type="InterPro" id="IPR050861">
    <property type="entry name" value="Dihydroxyacetone_Kinase"/>
</dbReference>
<dbReference type="NCBIfam" id="TIGR02361">
    <property type="entry name" value="dak_ATP"/>
    <property type="match status" value="1"/>
</dbReference>
<dbReference type="NCBIfam" id="NF011049">
    <property type="entry name" value="PRK14479.1"/>
    <property type="match status" value="1"/>
</dbReference>
<dbReference type="PANTHER" id="PTHR28629">
    <property type="entry name" value="TRIOKINASE/FMN CYCLASE"/>
    <property type="match status" value="1"/>
</dbReference>
<dbReference type="PANTHER" id="PTHR28629:SF4">
    <property type="entry name" value="TRIOKINASE_FMN CYCLASE"/>
    <property type="match status" value="1"/>
</dbReference>
<dbReference type="Pfam" id="PF02733">
    <property type="entry name" value="Dak1"/>
    <property type="match status" value="1"/>
</dbReference>
<dbReference type="Pfam" id="PF02734">
    <property type="entry name" value="Dak2"/>
    <property type="match status" value="1"/>
</dbReference>
<dbReference type="SMART" id="SM01120">
    <property type="entry name" value="Dak2"/>
    <property type="match status" value="1"/>
</dbReference>
<dbReference type="SUPFAM" id="SSF82549">
    <property type="entry name" value="DAK1/DegV-like"/>
    <property type="match status" value="1"/>
</dbReference>
<dbReference type="SUPFAM" id="SSF101473">
    <property type="entry name" value="DhaL-like"/>
    <property type="match status" value="1"/>
</dbReference>
<dbReference type="PROSITE" id="PS51481">
    <property type="entry name" value="DHAK"/>
    <property type="match status" value="1"/>
</dbReference>
<dbReference type="PROSITE" id="PS51480">
    <property type="entry name" value="DHAL"/>
    <property type="match status" value="1"/>
</dbReference>
<reference key="1">
    <citation type="journal article" date="2004" name="Genome Res.">
        <title>The status, quality, and expansion of the NIH full-length cDNA project: the Mammalian Gene Collection (MGC).</title>
        <authorList>
            <consortium name="The MGC Project Team"/>
        </authorList>
    </citation>
    <scope>NUCLEOTIDE SEQUENCE [LARGE SCALE MRNA]</scope>
    <source>
        <tissue>Eye</tissue>
    </source>
</reference>
<reference key="2">
    <citation type="journal article" date="2010" name="Cell">
        <title>A tissue-specific atlas of mouse protein phosphorylation and expression.</title>
        <authorList>
            <person name="Huttlin E.L."/>
            <person name="Jedrychowski M.P."/>
            <person name="Elias J.E."/>
            <person name="Goswami T."/>
            <person name="Rad R."/>
            <person name="Beausoleil S.A."/>
            <person name="Villen J."/>
            <person name="Haas W."/>
            <person name="Sowa M.E."/>
            <person name="Gygi S.P."/>
        </authorList>
    </citation>
    <scope>PHOSPHORYLATION [LARGE SCALE ANALYSIS] AT SER-511</scope>
    <scope>IDENTIFICATION BY MASS SPECTROMETRY [LARGE SCALE ANALYSIS]</scope>
    <source>
        <tissue>Brain</tissue>
        <tissue>Brown adipose tissue</tissue>
        <tissue>Heart</tissue>
        <tissue>Kidney</tissue>
        <tissue>Liver</tissue>
        <tissue>Lung</tissue>
        <tissue>Pancreas</tissue>
        <tissue>Spleen</tissue>
        <tissue>Testis</tissue>
    </source>
</reference>
<name>TKFC_MOUSE</name>
<organism>
    <name type="scientific">Mus musculus</name>
    <name type="common">Mouse</name>
    <dbReference type="NCBI Taxonomy" id="10090"/>
    <lineage>
        <taxon>Eukaryota</taxon>
        <taxon>Metazoa</taxon>
        <taxon>Chordata</taxon>
        <taxon>Craniata</taxon>
        <taxon>Vertebrata</taxon>
        <taxon>Euteleostomi</taxon>
        <taxon>Mammalia</taxon>
        <taxon>Eutheria</taxon>
        <taxon>Euarchontoglires</taxon>
        <taxon>Glires</taxon>
        <taxon>Rodentia</taxon>
        <taxon>Myomorpha</taxon>
        <taxon>Muroidea</taxon>
        <taxon>Muridae</taxon>
        <taxon>Murinae</taxon>
        <taxon>Mus</taxon>
        <taxon>Mus</taxon>
    </lineage>
</organism>
<comment type="function">
    <text evidence="2 3 4">Catalyzes both the phosphorylation of dihydroxyacetone and of glyceraldehyde, and the splitting of ribonucleoside diphosphate-X compounds among which FAD is the best substrate. Represses IFIH1-mediated cellular antiviral response.</text>
</comment>
<comment type="catalytic activity">
    <reaction>
        <text>dihydroxyacetone + ATP = dihydroxyacetone phosphate + ADP + H(+)</text>
        <dbReference type="Rhea" id="RHEA:15773"/>
        <dbReference type="ChEBI" id="CHEBI:15378"/>
        <dbReference type="ChEBI" id="CHEBI:16016"/>
        <dbReference type="ChEBI" id="CHEBI:30616"/>
        <dbReference type="ChEBI" id="CHEBI:57642"/>
        <dbReference type="ChEBI" id="CHEBI:456216"/>
        <dbReference type="EC" id="2.7.1.29"/>
    </reaction>
</comment>
<comment type="catalytic activity">
    <reaction>
        <text>D-glyceraldehyde + ATP = D-glyceraldehyde 3-phosphate + ADP + H(+)</text>
        <dbReference type="Rhea" id="RHEA:13941"/>
        <dbReference type="ChEBI" id="CHEBI:15378"/>
        <dbReference type="ChEBI" id="CHEBI:17378"/>
        <dbReference type="ChEBI" id="CHEBI:30616"/>
        <dbReference type="ChEBI" id="CHEBI:59776"/>
        <dbReference type="ChEBI" id="CHEBI:456216"/>
        <dbReference type="EC" id="2.7.1.28"/>
    </reaction>
</comment>
<comment type="catalytic activity">
    <reaction>
        <text>FAD = riboflavin cyclic-4',5'-phosphate + AMP + H(+)</text>
        <dbReference type="Rhea" id="RHEA:13729"/>
        <dbReference type="ChEBI" id="CHEBI:15378"/>
        <dbReference type="ChEBI" id="CHEBI:57692"/>
        <dbReference type="ChEBI" id="CHEBI:76202"/>
        <dbReference type="ChEBI" id="CHEBI:456215"/>
        <dbReference type="EC" id="4.6.1.15"/>
    </reaction>
</comment>
<comment type="cofactor">
    <cofactor evidence="1">
        <name>Mg(2+)</name>
        <dbReference type="ChEBI" id="CHEBI:18420"/>
    </cofactor>
</comment>
<comment type="cofactor">
    <cofactor evidence="1">
        <name>Mn(2+)</name>
        <dbReference type="ChEBI" id="CHEBI:29035"/>
    </cofactor>
    <cofactor evidence="1">
        <name>Co(2+)</name>
        <dbReference type="ChEBI" id="CHEBI:48828"/>
    </cofactor>
    <text evidence="1">Manganese or cobalt are requested for FAD-AMP lyase activity.</text>
</comment>
<comment type="activity regulation">
    <text evidence="1">Each activity is inhibited by the substrate(s) of the other.</text>
</comment>
<comment type="subunit">
    <text evidence="2 3">Homodimer (By similarity). Interacts with IFIH1 (via the CARD domains), the interaction is inhibited by viral infection (By similarity).</text>
</comment>
<comment type="domain">
    <text evidence="3">DhaK and DhaL domains have differential roles, individually DhaK is inactive and DhaL displays cyclase but not kinase activity.</text>
</comment>
<comment type="similarity">
    <text evidence="7">Belongs to the dihydroxyacetone kinase (DAK) family.</text>
</comment>
<feature type="chain" id="PRO_0000121526" description="Triokinase/FMN cyclase">
    <location>
        <begin position="1"/>
        <end position="578"/>
    </location>
</feature>
<feature type="domain" description="DhaK" evidence="6">
    <location>
        <begin position="9"/>
        <end position="336"/>
    </location>
</feature>
<feature type="domain" description="DhaL" evidence="5">
    <location>
        <begin position="372"/>
        <end position="571"/>
    </location>
</feature>
<feature type="active site" description="Tele-hemiaminal-histidine intermediate" evidence="6">
    <location>
        <position position="221"/>
    </location>
</feature>
<feature type="binding site" evidence="1">
    <location>
        <begin position="56"/>
        <end position="59"/>
    </location>
    <ligand>
        <name>dihydroxyacetone</name>
        <dbReference type="ChEBI" id="CHEBI:16016"/>
    </ligand>
</feature>
<feature type="binding site" evidence="6">
    <location>
        <position position="109"/>
    </location>
    <ligand>
        <name>dihydroxyacetone</name>
        <dbReference type="ChEBI" id="CHEBI:16016"/>
    </ligand>
</feature>
<feature type="binding site" evidence="6">
    <location>
        <position position="114"/>
    </location>
    <ligand>
        <name>dihydroxyacetone</name>
        <dbReference type="ChEBI" id="CHEBI:16016"/>
    </ligand>
</feature>
<feature type="binding site" evidence="1">
    <location>
        <begin position="401"/>
        <end position="404"/>
    </location>
    <ligand>
        <name>ATP</name>
        <dbReference type="ChEBI" id="CHEBI:30616"/>
    </ligand>
</feature>
<feature type="binding site" evidence="1">
    <location>
        <begin position="446"/>
        <end position="447"/>
    </location>
    <ligand>
        <name>ATP</name>
        <dbReference type="ChEBI" id="CHEBI:30616"/>
    </ligand>
</feature>
<feature type="binding site" evidence="1">
    <location>
        <position position="486"/>
    </location>
    <ligand>
        <name>ATP</name>
        <dbReference type="ChEBI" id="CHEBI:30616"/>
    </ligand>
</feature>
<feature type="binding site" evidence="1">
    <location>
        <begin position="494"/>
        <end position="495"/>
    </location>
    <ligand>
        <name>ATP</name>
        <dbReference type="ChEBI" id="CHEBI:30616"/>
    </ligand>
</feature>
<feature type="binding site" evidence="1">
    <location>
        <begin position="556"/>
        <end position="558"/>
    </location>
    <ligand>
        <name>ATP</name>
        <dbReference type="ChEBI" id="CHEBI:30616"/>
    </ligand>
</feature>
<feature type="modified residue" description="Phosphoserine" evidence="9">
    <location>
        <position position="511"/>
    </location>
</feature>
<feature type="modified residue" description="Phosphoserine" evidence="4">
    <location>
        <position position="545"/>
    </location>
</feature>
<proteinExistence type="evidence at protein level"/>
<accession>Q8VC30</accession>
<evidence type="ECO:0000250" key="1"/>
<evidence type="ECO:0000250" key="2">
    <source>
        <dbReference type="UniProtKB" id="F1RKQ4"/>
    </source>
</evidence>
<evidence type="ECO:0000250" key="3">
    <source>
        <dbReference type="UniProtKB" id="Q3LXA3"/>
    </source>
</evidence>
<evidence type="ECO:0000250" key="4">
    <source>
        <dbReference type="UniProtKB" id="Q4KLZ6"/>
    </source>
</evidence>
<evidence type="ECO:0000255" key="5">
    <source>
        <dbReference type="PROSITE-ProRule" id="PRU00813"/>
    </source>
</evidence>
<evidence type="ECO:0000255" key="6">
    <source>
        <dbReference type="PROSITE-ProRule" id="PRU00814"/>
    </source>
</evidence>
<evidence type="ECO:0000305" key="7"/>
<evidence type="ECO:0000312" key="8">
    <source>
        <dbReference type="MGI" id="MGI:2385084"/>
    </source>
</evidence>
<evidence type="ECO:0007744" key="9">
    <source>
    </source>
</evidence>
<sequence length="578" mass="59691">MSSKKMVNSVEGCADDALAGLVASNPDLQLLQGHRVALRSDLDTLKGRVALLSGGGSGHEPAHAGFIGKGMLTGVIAGSVFASPPVGSILAAIRAVAQAGTVGTLLIVKNYTGDRLNFGLAMEQAKAEGISVEMVIVEDDSAFTVLKKAGRRGLCGTVLIHKVAGALAEEGMGLEEITKRVSVIAKTMGTLGVSLSSCSVPGATHTFELAADEIELGLGIHGEAGVRRIKIAPVDQIVTLMLDHMTNTSNIFHVPVRSGSSVVLIVNNLGGLSFLELGIIADAAIRLLEGRGVKVARALVGTFMSALEMPGVSLTLMLVDEPVLKLIDAETTAKAWPHMAKVSVTGRKRIRAAPTEPPEAPEATAAGGVTSKQMALVLDRICTTLIGLEEHLNALDRAAGDGDCGSTHSRAAKAIQGWLKEGPSLTSPAQVLSRLSVLLLERMGGSSGALYGLFLTAAAQPLKAKTDLPTWSAAMDAGLESMQKYGKAAPGDRTMLDSLWAAAQEFQAWKSPGASLLPVLTKAVKSAEAAAEATKNMEAGAGRASYISSAQLDQPDPGAVAAAAIFRAILEVLQTQGA</sequence>
<gene>
    <name evidence="8" type="primary">Tkfc</name>
    <name evidence="8" type="synonym">Dak</name>
</gene>
<keyword id="KW-0067">ATP-binding</keyword>
<keyword id="KW-0170">Cobalt</keyword>
<keyword id="KW-0274">FAD</keyword>
<keyword id="KW-0285">Flavoprotein</keyword>
<keyword id="KW-0418">Kinase</keyword>
<keyword id="KW-0456">Lyase</keyword>
<keyword id="KW-0460">Magnesium</keyword>
<keyword id="KW-0464">Manganese</keyword>
<keyword id="KW-0479">Metal-binding</keyword>
<keyword id="KW-0511">Multifunctional enzyme</keyword>
<keyword id="KW-0547">Nucleotide-binding</keyword>
<keyword id="KW-0597">Phosphoprotein</keyword>
<keyword id="KW-1185">Reference proteome</keyword>
<keyword id="KW-0808">Transferase</keyword>
<protein>
    <recommendedName>
        <fullName evidence="8">Triokinase/FMN cyclase</fullName>
    </recommendedName>
    <alternativeName>
        <fullName>Bifunctional ATP-dependent dihydroxyacetone kinase/FAD-AMP lyase (cyclizing)</fullName>
    </alternativeName>
    <domain>
        <recommendedName>
            <fullName>ATP-dependent dihydroxyacetone kinase</fullName>
            <shortName>DHA kinase</shortName>
            <ecNumber>2.7.1.28</ecNumber>
            <ecNumber>2.7.1.29</ecNumber>
        </recommendedName>
        <alternativeName>
            <fullName>Glycerone kinase</fullName>
        </alternativeName>
        <alternativeName>
            <fullName>Triokinase</fullName>
        </alternativeName>
        <alternativeName>
            <fullName>Triose kinase</fullName>
        </alternativeName>
    </domain>
    <domain>
        <recommendedName>
            <fullName>FAD-AMP lyase (cyclizing)</fullName>
            <ecNumber>4.6.1.15</ecNumber>
        </recommendedName>
        <alternativeName>
            <fullName>FAD-AMP lyase (cyclic FMN forming)</fullName>
        </alternativeName>
        <alternativeName>
            <fullName>FMN cyclase</fullName>
        </alternativeName>
    </domain>
</protein>